<protein>
    <recommendedName>
        <fullName evidence="1">Uncharacterized protein MIR1-1HG</fullName>
    </recommendedName>
    <alternativeName>
        <fullName evidence="1">MIR1-1 host gene protein</fullName>
    </alternativeName>
</protein>
<reference key="1">
    <citation type="journal article" date="2004" name="Nat. Genet.">
        <title>Complete sequencing and characterization of 21,243 full-length human cDNAs.</title>
        <authorList>
            <person name="Ota T."/>
            <person name="Suzuki Y."/>
            <person name="Nishikawa T."/>
            <person name="Otsuki T."/>
            <person name="Sugiyama T."/>
            <person name="Irie R."/>
            <person name="Wakamatsu A."/>
            <person name="Hayashi K."/>
            <person name="Sato H."/>
            <person name="Nagai K."/>
            <person name="Kimura K."/>
            <person name="Makita H."/>
            <person name="Sekine M."/>
            <person name="Obayashi M."/>
            <person name="Nishi T."/>
            <person name="Shibahara T."/>
            <person name="Tanaka T."/>
            <person name="Ishii S."/>
            <person name="Yamamoto J."/>
            <person name="Saito K."/>
            <person name="Kawai Y."/>
            <person name="Isono Y."/>
            <person name="Nakamura Y."/>
            <person name="Nagahari K."/>
            <person name="Murakami K."/>
            <person name="Yasuda T."/>
            <person name="Iwayanagi T."/>
            <person name="Wagatsuma M."/>
            <person name="Shiratori A."/>
            <person name="Sudo H."/>
            <person name="Hosoiri T."/>
            <person name="Kaku Y."/>
            <person name="Kodaira H."/>
            <person name="Kondo H."/>
            <person name="Sugawara M."/>
            <person name="Takahashi M."/>
            <person name="Kanda K."/>
            <person name="Yokoi T."/>
            <person name="Furuya T."/>
            <person name="Kikkawa E."/>
            <person name="Omura Y."/>
            <person name="Abe K."/>
            <person name="Kamihara K."/>
            <person name="Katsuta N."/>
            <person name="Sato K."/>
            <person name="Tanikawa M."/>
            <person name="Yamazaki M."/>
            <person name="Ninomiya K."/>
            <person name="Ishibashi T."/>
            <person name="Yamashita H."/>
            <person name="Murakawa K."/>
            <person name="Fujimori K."/>
            <person name="Tanai H."/>
            <person name="Kimata M."/>
            <person name="Watanabe M."/>
            <person name="Hiraoka S."/>
            <person name="Chiba Y."/>
            <person name="Ishida S."/>
            <person name="Ono Y."/>
            <person name="Takiguchi S."/>
            <person name="Watanabe S."/>
            <person name="Yosida M."/>
            <person name="Hotuta T."/>
            <person name="Kusano J."/>
            <person name="Kanehori K."/>
            <person name="Takahashi-Fujii A."/>
            <person name="Hara H."/>
            <person name="Tanase T.-O."/>
            <person name="Nomura Y."/>
            <person name="Togiya S."/>
            <person name="Komai F."/>
            <person name="Hara R."/>
            <person name="Takeuchi K."/>
            <person name="Arita M."/>
            <person name="Imose N."/>
            <person name="Musashino K."/>
            <person name="Yuuki H."/>
            <person name="Oshima A."/>
            <person name="Sasaki N."/>
            <person name="Aotsuka S."/>
            <person name="Yoshikawa Y."/>
            <person name="Matsunawa H."/>
            <person name="Ichihara T."/>
            <person name="Shiohata N."/>
            <person name="Sano S."/>
            <person name="Moriya S."/>
            <person name="Momiyama H."/>
            <person name="Satoh N."/>
            <person name="Takami S."/>
            <person name="Terashima Y."/>
            <person name="Suzuki O."/>
            <person name="Nakagawa S."/>
            <person name="Senoh A."/>
            <person name="Mizoguchi H."/>
            <person name="Goto Y."/>
            <person name="Shimizu F."/>
            <person name="Wakebe H."/>
            <person name="Hishigaki H."/>
            <person name="Watanabe T."/>
            <person name="Sugiyama A."/>
            <person name="Takemoto M."/>
            <person name="Kawakami B."/>
            <person name="Yamazaki M."/>
            <person name="Watanabe K."/>
            <person name="Kumagai A."/>
            <person name="Itakura S."/>
            <person name="Fukuzumi Y."/>
            <person name="Fujimori Y."/>
            <person name="Komiyama M."/>
            <person name="Tashiro H."/>
            <person name="Tanigami A."/>
            <person name="Fujiwara T."/>
            <person name="Ono T."/>
            <person name="Yamada K."/>
            <person name="Fujii Y."/>
            <person name="Ozaki K."/>
            <person name="Hirao M."/>
            <person name="Ohmori Y."/>
            <person name="Kawabata A."/>
            <person name="Hikiji T."/>
            <person name="Kobatake N."/>
            <person name="Inagaki H."/>
            <person name="Ikema Y."/>
            <person name="Okamoto S."/>
            <person name="Okitani R."/>
            <person name="Kawakami T."/>
            <person name="Noguchi S."/>
            <person name="Itoh T."/>
            <person name="Shigeta K."/>
            <person name="Senba T."/>
            <person name="Matsumura K."/>
            <person name="Nakajima Y."/>
            <person name="Mizuno T."/>
            <person name="Morinaga M."/>
            <person name="Sasaki M."/>
            <person name="Togashi T."/>
            <person name="Oyama M."/>
            <person name="Hata H."/>
            <person name="Watanabe M."/>
            <person name="Komatsu T."/>
            <person name="Mizushima-Sugano J."/>
            <person name="Satoh T."/>
            <person name="Shirai Y."/>
            <person name="Takahashi Y."/>
            <person name="Nakagawa K."/>
            <person name="Okumura K."/>
            <person name="Nagase T."/>
            <person name="Nomura N."/>
            <person name="Kikuchi H."/>
            <person name="Masuho Y."/>
            <person name="Yamashita R."/>
            <person name="Nakai K."/>
            <person name="Yada T."/>
            <person name="Nakamura Y."/>
            <person name="Ohara O."/>
            <person name="Isogai T."/>
            <person name="Sugano S."/>
        </authorList>
    </citation>
    <scope>NUCLEOTIDE SEQUENCE [LARGE SCALE MRNA]</scope>
</reference>
<reference key="2">
    <citation type="journal article" date="2001" name="Nature">
        <title>The DNA sequence and comparative analysis of human chromosome 20.</title>
        <authorList>
            <person name="Deloukas P."/>
            <person name="Matthews L.H."/>
            <person name="Ashurst J.L."/>
            <person name="Burton J."/>
            <person name="Gilbert J.G.R."/>
            <person name="Jones M."/>
            <person name="Stavrides G."/>
            <person name="Almeida J.P."/>
            <person name="Babbage A.K."/>
            <person name="Bagguley C.L."/>
            <person name="Bailey J."/>
            <person name="Barlow K.F."/>
            <person name="Bates K.N."/>
            <person name="Beard L.M."/>
            <person name="Beare D.M."/>
            <person name="Beasley O.P."/>
            <person name="Bird C.P."/>
            <person name="Blakey S.E."/>
            <person name="Bridgeman A.M."/>
            <person name="Brown A.J."/>
            <person name="Buck D."/>
            <person name="Burrill W.D."/>
            <person name="Butler A.P."/>
            <person name="Carder C."/>
            <person name="Carter N.P."/>
            <person name="Chapman J.C."/>
            <person name="Clamp M."/>
            <person name="Clark G."/>
            <person name="Clark L.N."/>
            <person name="Clark S.Y."/>
            <person name="Clee C.M."/>
            <person name="Clegg S."/>
            <person name="Cobley V.E."/>
            <person name="Collier R.E."/>
            <person name="Connor R.E."/>
            <person name="Corby N.R."/>
            <person name="Coulson A."/>
            <person name="Coville G.J."/>
            <person name="Deadman R."/>
            <person name="Dhami P.D."/>
            <person name="Dunn M."/>
            <person name="Ellington A.G."/>
            <person name="Frankland J.A."/>
            <person name="Fraser A."/>
            <person name="French L."/>
            <person name="Garner P."/>
            <person name="Grafham D.V."/>
            <person name="Griffiths C."/>
            <person name="Griffiths M.N.D."/>
            <person name="Gwilliam R."/>
            <person name="Hall R.E."/>
            <person name="Hammond S."/>
            <person name="Harley J.L."/>
            <person name="Heath P.D."/>
            <person name="Ho S."/>
            <person name="Holden J.L."/>
            <person name="Howden P.J."/>
            <person name="Huckle E."/>
            <person name="Hunt A.R."/>
            <person name="Hunt S.E."/>
            <person name="Jekosch K."/>
            <person name="Johnson C.M."/>
            <person name="Johnson D."/>
            <person name="Kay M.P."/>
            <person name="Kimberley A.M."/>
            <person name="King A."/>
            <person name="Knights A."/>
            <person name="Laird G.K."/>
            <person name="Lawlor S."/>
            <person name="Lehvaeslaiho M.H."/>
            <person name="Leversha M.A."/>
            <person name="Lloyd C."/>
            <person name="Lloyd D.M."/>
            <person name="Lovell J.D."/>
            <person name="Marsh V.L."/>
            <person name="Martin S.L."/>
            <person name="McConnachie L.J."/>
            <person name="McLay K."/>
            <person name="McMurray A.A."/>
            <person name="Milne S.A."/>
            <person name="Mistry D."/>
            <person name="Moore M.J.F."/>
            <person name="Mullikin J.C."/>
            <person name="Nickerson T."/>
            <person name="Oliver K."/>
            <person name="Parker A."/>
            <person name="Patel R."/>
            <person name="Pearce T.A.V."/>
            <person name="Peck A.I."/>
            <person name="Phillimore B.J.C.T."/>
            <person name="Prathalingam S.R."/>
            <person name="Plumb R.W."/>
            <person name="Ramsay H."/>
            <person name="Rice C.M."/>
            <person name="Ross M.T."/>
            <person name="Scott C.E."/>
            <person name="Sehra H.K."/>
            <person name="Shownkeen R."/>
            <person name="Sims S."/>
            <person name="Skuce C.D."/>
            <person name="Smith M.L."/>
            <person name="Soderlund C."/>
            <person name="Steward C.A."/>
            <person name="Sulston J.E."/>
            <person name="Swann R.M."/>
            <person name="Sycamore N."/>
            <person name="Taylor R."/>
            <person name="Tee L."/>
            <person name="Thomas D.W."/>
            <person name="Thorpe A."/>
            <person name="Tracey A."/>
            <person name="Tromans A.C."/>
            <person name="Vaudin M."/>
            <person name="Wall M."/>
            <person name="Wallis J.M."/>
            <person name="Whitehead S.L."/>
            <person name="Whittaker P."/>
            <person name="Willey D.L."/>
            <person name="Williams L."/>
            <person name="Williams S.A."/>
            <person name="Wilming L."/>
            <person name="Wray P.W."/>
            <person name="Hubbard T."/>
            <person name="Durbin R.M."/>
            <person name="Bentley D.R."/>
            <person name="Beck S."/>
            <person name="Rogers J."/>
        </authorList>
    </citation>
    <scope>NUCLEOTIDE SEQUENCE [LARGE SCALE GENOMIC DNA]</scope>
</reference>
<reference key="3">
    <citation type="journal article" date="2004" name="Genome Res.">
        <title>The status, quality, and expansion of the NIH full-length cDNA project: the Mammalian Gene Collection (MGC).</title>
        <authorList>
            <consortium name="The MGC Project Team"/>
        </authorList>
    </citation>
    <scope>NUCLEOTIDE SEQUENCE [LARGE SCALE MRNA]</scope>
</reference>
<proteinExistence type="predicted"/>
<evidence type="ECO:0000312" key="1">
    <source>
        <dbReference type="HGNC" id="HGNC:16159"/>
    </source>
</evidence>
<name>MI1HG_HUMAN</name>
<feature type="chain" id="PRO_0000079480" description="Uncharacterized protein MIR1-1HG">
    <location>
        <begin position="1"/>
        <end position="117"/>
    </location>
</feature>
<feature type="sequence variant" id="VAR_019655" description="In dbSNP:rs6062251.">
    <original>V</original>
    <variation>A</variation>
    <location>
        <position position="27"/>
    </location>
</feature>
<sequence>MPSCSCALMAPCGPAAGPAAVERTQQVARGEPGSARGQLQVSPEMSITHKEKENAHLKEILLFVNAEAFSQPQPHSAPVCEGQQLTGKFSTSVLTRAGGDASPCSWERLLCYGWSHC</sequence>
<accession>Q9H1L0</accession>
<accession>Q2TB30</accession>
<organism>
    <name type="scientific">Homo sapiens</name>
    <name type="common">Human</name>
    <dbReference type="NCBI Taxonomy" id="9606"/>
    <lineage>
        <taxon>Eukaryota</taxon>
        <taxon>Metazoa</taxon>
        <taxon>Chordata</taxon>
        <taxon>Craniata</taxon>
        <taxon>Vertebrata</taxon>
        <taxon>Euteleostomi</taxon>
        <taxon>Mammalia</taxon>
        <taxon>Eutheria</taxon>
        <taxon>Euarchontoglires</taxon>
        <taxon>Primates</taxon>
        <taxon>Haplorrhini</taxon>
        <taxon>Catarrhini</taxon>
        <taxon>Hominidae</taxon>
        <taxon>Homo</taxon>
    </lineage>
</organism>
<keyword id="KW-1185">Reference proteome</keyword>
<gene>
    <name evidence="1" type="primary">MIR1-1HG</name>
    <name evidence="1" type="synonym">C20orf166</name>
</gene>
<dbReference type="EMBL" id="AK056985">
    <property type="status" value="NOT_ANNOTATED_CDS"/>
    <property type="molecule type" value="mRNA"/>
</dbReference>
<dbReference type="EMBL" id="AL449263">
    <property type="status" value="NOT_ANNOTATED_CDS"/>
    <property type="molecule type" value="Genomic_DNA"/>
</dbReference>
<dbReference type="EMBL" id="BC110595">
    <property type="protein sequence ID" value="AAI10596.1"/>
    <property type="molecule type" value="mRNA"/>
</dbReference>
<dbReference type="RefSeq" id="NP_001289741.1">
    <property type="nucleotide sequence ID" value="NM_001302812.1"/>
</dbReference>
<dbReference type="RefSeq" id="NP_848558.1">
    <property type="nucleotide sequence ID" value="NM_178463.3"/>
</dbReference>
<dbReference type="BioMuta" id="HGNC:16159"/>
<dbReference type="PaxDb" id="9606-ENSP00000359558"/>
<dbReference type="DNASU" id="128826"/>
<dbReference type="AGR" id="HGNC:16159"/>
<dbReference type="DisGeNET" id="128826"/>
<dbReference type="GeneCards" id="MIR1-1HG"/>
<dbReference type="HGNC" id="HGNC:16159">
    <property type="gene designation" value="MIR1-1HG"/>
</dbReference>
<dbReference type="neXtProt" id="NX_Q9H1L0"/>
<dbReference type="eggNOG" id="ENOG502TB1N">
    <property type="taxonomic scope" value="Eukaryota"/>
</dbReference>
<dbReference type="InParanoid" id="Q9H1L0"/>
<dbReference type="PAN-GO" id="Q9H1L0">
    <property type="GO annotations" value="0 GO annotations based on evolutionary models"/>
</dbReference>
<dbReference type="PhylomeDB" id="Q9H1L0"/>
<dbReference type="TreeFam" id="TF342233"/>
<dbReference type="PathwayCommons" id="Q9H1L0"/>
<dbReference type="BioGRID-ORCS" id="128826">
    <property type="hits" value="17 hits in 1123 CRISPR screens"/>
</dbReference>
<dbReference type="GenomeRNAi" id="128826"/>
<dbReference type="Pharos" id="Q9H1L0">
    <property type="development level" value="Tdark"/>
</dbReference>
<dbReference type="PRO" id="PR:Q9H1L0"/>
<dbReference type="Proteomes" id="UP000005640">
    <property type="component" value="Unplaced"/>
</dbReference>
<dbReference type="RNAct" id="Q9H1L0">
    <property type="molecule type" value="protein"/>
</dbReference>